<protein>
    <recommendedName>
        <fullName evidence="1">Large ribosomal subunit protein bL28</fullName>
    </recommendedName>
    <alternativeName>
        <fullName evidence="2">50S ribosomal protein L28</fullName>
    </alternativeName>
</protein>
<accession>Q8G7D7</accession>
<evidence type="ECO:0000255" key="1">
    <source>
        <dbReference type="HAMAP-Rule" id="MF_00373"/>
    </source>
</evidence>
<evidence type="ECO:0000305" key="2"/>
<sequence>MAARCAVCGKGPQTGFTVSHSHRRTKRSFRPNLQSVRTTIDGENTRLRVCVKCLKAGKVQRVAA</sequence>
<dbReference type="EMBL" id="AE014295">
    <property type="protein sequence ID" value="AAN24170.1"/>
    <property type="molecule type" value="Genomic_DNA"/>
</dbReference>
<dbReference type="RefSeq" id="NP_695534.1">
    <property type="nucleotide sequence ID" value="NC_004307.2"/>
</dbReference>
<dbReference type="RefSeq" id="WP_007051452.1">
    <property type="nucleotide sequence ID" value="NC_004307.2"/>
</dbReference>
<dbReference type="SMR" id="Q8G7D7"/>
<dbReference type="STRING" id="206672.BL0330"/>
<dbReference type="EnsemblBacteria" id="AAN24170">
    <property type="protein sequence ID" value="AAN24170"/>
    <property type="gene ID" value="BL0330"/>
</dbReference>
<dbReference type="GeneID" id="69577526"/>
<dbReference type="KEGG" id="blo:BL0330"/>
<dbReference type="PATRIC" id="fig|206672.9.peg.1069"/>
<dbReference type="HOGENOM" id="CLU_064548_7_0_11"/>
<dbReference type="OrthoDB" id="9805609at2"/>
<dbReference type="PhylomeDB" id="Q8G7D7"/>
<dbReference type="Proteomes" id="UP000000439">
    <property type="component" value="Chromosome"/>
</dbReference>
<dbReference type="GO" id="GO:1990904">
    <property type="term" value="C:ribonucleoprotein complex"/>
    <property type="evidence" value="ECO:0007669"/>
    <property type="project" value="UniProtKB-KW"/>
</dbReference>
<dbReference type="GO" id="GO:0005840">
    <property type="term" value="C:ribosome"/>
    <property type="evidence" value="ECO:0007669"/>
    <property type="project" value="UniProtKB-KW"/>
</dbReference>
<dbReference type="GO" id="GO:0003735">
    <property type="term" value="F:structural constituent of ribosome"/>
    <property type="evidence" value="ECO:0007669"/>
    <property type="project" value="InterPro"/>
</dbReference>
<dbReference type="GO" id="GO:0006412">
    <property type="term" value="P:translation"/>
    <property type="evidence" value="ECO:0007669"/>
    <property type="project" value="UniProtKB-UniRule"/>
</dbReference>
<dbReference type="Gene3D" id="2.30.170.40">
    <property type="entry name" value="Ribosomal protein L28/L24"/>
    <property type="match status" value="1"/>
</dbReference>
<dbReference type="HAMAP" id="MF_00373">
    <property type="entry name" value="Ribosomal_bL28"/>
    <property type="match status" value="1"/>
</dbReference>
<dbReference type="InterPro" id="IPR050096">
    <property type="entry name" value="Bacterial_rp_bL28"/>
</dbReference>
<dbReference type="InterPro" id="IPR026569">
    <property type="entry name" value="Ribosomal_bL28"/>
</dbReference>
<dbReference type="InterPro" id="IPR034704">
    <property type="entry name" value="Ribosomal_bL28/bL31-like_sf"/>
</dbReference>
<dbReference type="InterPro" id="IPR001383">
    <property type="entry name" value="Ribosomal_bL28_bact-type"/>
</dbReference>
<dbReference type="InterPro" id="IPR037147">
    <property type="entry name" value="Ribosomal_bL28_sf"/>
</dbReference>
<dbReference type="NCBIfam" id="TIGR00009">
    <property type="entry name" value="L28"/>
    <property type="match status" value="1"/>
</dbReference>
<dbReference type="PANTHER" id="PTHR39080">
    <property type="entry name" value="50S RIBOSOMAL PROTEIN L28"/>
    <property type="match status" value="1"/>
</dbReference>
<dbReference type="PANTHER" id="PTHR39080:SF1">
    <property type="entry name" value="LARGE RIBOSOMAL SUBUNIT PROTEIN BL28A"/>
    <property type="match status" value="1"/>
</dbReference>
<dbReference type="Pfam" id="PF00830">
    <property type="entry name" value="Ribosomal_L28"/>
    <property type="match status" value="1"/>
</dbReference>
<dbReference type="SUPFAM" id="SSF143800">
    <property type="entry name" value="L28p-like"/>
    <property type="match status" value="1"/>
</dbReference>
<name>RL28_BIFLO</name>
<gene>
    <name evidence="1" type="primary">rpmB</name>
    <name type="ordered locus">BL0330</name>
</gene>
<organism>
    <name type="scientific">Bifidobacterium longum (strain NCC 2705)</name>
    <dbReference type="NCBI Taxonomy" id="206672"/>
    <lineage>
        <taxon>Bacteria</taxon>
        <taxon>Bacillati</taxon>
        <taxon>Actinomycetota</taxon>
        <taxon>Actinomycetes</taxon>
        <taxon>Bifidobacteriales</taxon>
        <taxon>Bifidobacteriaceae</taxon>
        <taxon>Bifidobacterium</taxon>
    </lineage>
</organism>
<keyword id="KW-1185">Reference proteome</keyword>
<keyword id="KW-0687">Ribonucleoprotein</keyword>
<keyword id="KW-0689">Ribosomal protein</keyword>
<feature type="chain" id="PRO_0000178435" description="Large ribosomal subunit protein bL28">
    <location>
        <begin position="1"/>
        <end position="64"/>
    </location>
</feature>
<reference key="1">
    <citation type="journal article" date="2002" name="Proc. Natl. Acad. Sci. U.S.A.">
        <title>The genome sequence of Bifidobacterium longum reflects its adaptation to the human gastrointestinal tract.</title>
        <authorList>
            <person name="Schell M.A."/>
            <person name="Karmirantzou M."/>
            <person name="Snel B."/>
            <person name="Vilanova D."/>
            <person name="Berger B."/>
            <person name="Pessi G."/>
            <person name="Zwahlen M.-C."/>
            <person name="Desiere F."/>
            <person name="Bork P."/>
            <person name="Delley M."/>
            <person name="Pridmore R.D."/>
            <person name="Arigoni F."/>
        </authorList>
    </citation>
    <scope>NUCLEOTIDE SEQUENCE [LARGE SCALE GENOMIC DNA]</scope>
    <source>
        <strain>NCC 2705</strain>
    </source>
</reference>
<comment type="similarity">
    <text evidence="1">Belongs to the bacterial ribosomal protein bL28 family.</text>
</comment>
<proteinExistence type="inferred from homology"/>